<reference key="1">
    <citation type="journal article" date="1999" name="Genomics">
        <title>Identification of a mammalian angiopoietin-related protein expressed specifically in liver.</title>
        <authorList>
            <person name="Conklin D."/>
            <person name="Gilbertson D."/>
            <person name="Taft D.W."/>
            <person name="Maurer M.F."/>
            <person name="Whitmore T.E."/>
            <person name="Smith D.L."/>
            <person name="Walker K.M."/>
            <person name="Chen L.H."/>
            <person name="Wattler S."/>
            <person name="Nehls M."/>
            <person name="Lewis K.B."/>
        </authorList>
    </citation>
    <scope>NUCLEOTIDE SEQUENCE [MRNA]</scope>
    <scope>TISSUE SPECIFICITY</scope>
</reference>
<reference key="2">
    <citation type="journal article" date="2004" name="Genome Res.">
        <title>The status, quality, and expansion of the NIH full-length cDNA project: the Mammalian Gene Collection (MGC).</title>
        <authorList>
            <consortium name="The MGC Project Team"/>
        </authorList>
    </citation>
    <scope>NUCLEOTIDE SEQUENCE [LARGE SCALE MRNA]</scope>
    <source>
        <tissue>Liver</tissue>
    </source>
</reference>
<reference key="3">
    <citation type="journal article" date="2002" name="J. Biol. Chem.">
        <title>ANGPTL3 stimulates endothelial cell adhesion and migration via integrin alpha vbeta 3 and induces blood vessel formation in vivo.</title>
        <authorList>
            <person name="Camenisch G."/>
            <person name="Pisabarro M.T."/>
            <person name="Sherman D."/>
            <person name="Kowalski J."/>
            <person name="Nagel M."/>
            <person name="Hass P."/>
            <person name="Xie M.H."/>
            <person name="Gurney A."/>
            <person name="Bodary S."/>
            <person name="Liang X.H."/>
            <person name="Clark K."/>
            <person name="Beresini M."/>
            <person name="Ferrara N."/>
            <person name="Gerber H.P."/>
        </authorList>
    </citation>
    <scope>FUNCTION</scope>
</reference>
<reference key="4">
    <citation type="journal article" date="2002" name="Nat. Genet.">
        <title>Angptl3 regulates lipid metabolism in mice.</title>
        <authorList>
            <person name="Koishi R."/>
            <person name="Ando Y."/>
            <person name="Ono M."/>
            <person name="Shimamura M."/>
            <person name="Yasumo H."/>
            <person name="Fujiwara T."/>
            <person name="Horikoshi H."/>
            <person name="Furukawa H."/>
        </authorList>
    </citation>
    <scope>FUNCTION</scope>
    <scope>DISRUPTION PHENOTYPE</scope>
</reference>
<reference key="5">
    <citation type="journal article" date="2003" name="J. Biol. Chem.">
        <title>Protein region important for regulation of lipid metabolism in angiopoietin-like 3 (ANGPTL3): ANGPTL3 is cleaved and activated in vivo.</title>
        <authorList>
            <person name="Ono M."/>
            <person name="Shimizugawa T."/>
            <person name="Shimamura M."/>
            <person name="Yoshida K."/>
            <person name="Noji-Sakikawa C."/>
            <person name="Ando Y."/>
            <person name="Koishi R."/>
            <person name="Furukawa H."/>
        </authorList>
    </citation>
    <scope>PROTEOLYTIC CLEAVAGE</scope>
</reference>
<reference key="6">
    <citation type="journal article" date="2003" name="J. Lipid Res.">
        <title>A decreased expression of angiopoietin-like 3 is protective against atherosclerosis in apoE-deficient mice.</title>
        <authorList>
            <person name="Ando Y."/>
            <person name="Shimizugawa T."/>
            <person name="Takeshita S."/>
            <person name="Ono M."/>
            <person name="Shimamura M."/>
            <person name="Koishi R."/>
            <person name="Furukawa H."/>
        </authorList>
    </citation>
    <scope>FUNCTION</scope>
</reference>
<reference key="7">
    <citation type="journal article" date="2004" name="Biochem. Biophys. Res. Commun.">
        <title>Leptin and insulin down-regulate angiopoietin-like protein 3, a plasma triglyceride-increasing factor.</title>
        <authorList>
            <person name="Shimamura M."/>
            <person name="Matsuda M."/>
            <person name="Ando Y."/>
            <person name="Koishi R."/>
            <person name="Yasumo H."/>
            <person name="Furukawa H."/>
            <person name="Shimomura I."/>
        </authorList>
    </citation>
    <scope>INDUCTION</scope>
</reference>
<reference key="8">
    <citation type="journal article" date="2005" name="J. Lipid Res.">
        <title>Differential regulation and properties of angiopoietin-like proteins 3 and 4.</title>
        <authorList>
            <person name="Ge H."/>
            <person name="Cha J.Y."/>
            <person name="Gopal H."/>
            <person name="Harp C."/>
            <person name="Yu X."/>
            <person name="Repa J.J."/>
            <person name="Li C."/>
        </authorList>
    </citation>
    <scope>INDUCTION</scope>
</reference>
<reference key="9">
    <citation type="journal article" date="2005" name="Endocrinology">
        <title>Transgenic angiopoietin-like (angptl)4 overexpression and targeted disruption of angptl4 and angptl3: regulation of triglyceride metabolism.</title>
        <authorList>
            <person name="Koester A."/>
            <person name="Chao Y.B."/>
            <person name="Mosior M."/>
            <person name="Ford A."/>
            <person name="Gonzalez-DeWhitt P.A."/>
            <person name="Hale J.E."/>
            <person name="Li D."/>
            <person name="Qiu Y."/>
            <person name="Fraser C.C."/>
            <person name="Yang D.D."/>
            <person name="Heuer J.G."/>
            <person name="Jaskunas S.R."/>
            <person name="Eacho P."/>
        </authorList>
    </citation>
    <scope>FUNCTION</scope>
    <scope>DISRUPTION PHENOTYPE</scope>
</reference>
<reference key="10">
    <citation type="journal article" date="2006" name="Exp. Anim.">
        <title>Angptl3-null mice show low plasma lipid concentrations by enhanced lipoprotein lipase activity.</title>
        <authorList>
            <person name="Fujimoto K."/>
            <person name="Koishi R."/>
            <person name="Shimizugawa T."/>
            <person name="Ando Y."/>
        </authorList>
    </citation>
    <scope>DISRUPTION PHENOTYPE</scope>
</reference>
<reference key="11">
    <citation type="journal article" date="2007" name="Arterioscler. Thromb. Vasc. Biol.">
        <title>Angiopoietin-like protein3 regulates plasma HDL cholesterol through suppression of endothelial lipase.</title>
        <authorList>
            <person name="Shimamura M."/>
            <person name="Matsuda M."/>
            <person name="Yasumo H."/>
            <person name="Okazaki M."/>
            <person name="Fujimoto K."/>
            <person name="Kono K."/>
            <person name="Shimizugawa T."/>
            <person name="Ando Y."/>
            <person name="Koishi R."/>
            <person name="Kohama T."/>
            <person name="Sakai N."/>
            <person name="Kotani K."/>
            <person name="Komuro R."/>
            <person name="Ishida T."/>
            <person name="Hirata K."/>
            <person name="Yamashita S."/>
            <person name="Furukawa H."/>
            <person name="Shimomura I."/>
        </authorList>
    </citation>
    <scope>DISRUPTION PHENOTYPE</scope>
</reference>
<reference key="12">
    <citation type="journal article" date="2007" name="Cell Metab.">
        <title>Hepatic proprotein convertases modulate HDL metabolism.</title>
        <authorList>
            <person name="Jin W."/>
            <person name="Wang X."/>
            <person name="Millar J.S."/>
            <person name="Quertermous T."/>
            <person name="Rothblat G.H."/>
            <person name="Glick J.M."/>
            <person name="Rader D.J."/>
        </authorList>
    </citation>
    <scope>FUNCTION</scope>
    <scope>PROTEOLYTIC CLEAVAGE</scope>
</reference>
<reference key="13">
    <citation type="journal article" date="2010" name="Biochem. Biophys. Res. Commun.">
        <title>Angiopoietin-like protein 3 regulates the motility and permeability of podocytes by altering nephrin expression in vitro.</title>
        <authorList>
            <person name="Gao X."/>
            <person name="Xu H."/>
            <person name="Liu H."/>
            <person name="Rao J."/>
            <person name="Li Y."/>
            <person name="Zha X."/>
        </authorList>
    </citation>
    <scope>FUNCTION</scope>
</reference>
<reference key="14">
    <citation type="journal article" date="2010" name="J. Biol. Chem.">
        <title>Angiopoietin-like protein 3 inhibits lipoprotein lipase activity through enhancing its cleavage by proprotein convertases.</title>
        <authorList>
            <person name="Liu J."/>
            <person name="Afroza H."/>
            <person name="Rader D.J."/>
            <person name="Jin W."/>
        </authorList>
    </citation>
    <scope>FUNCTION</scope>
    <scope>MUTAGENESIS OF ARG-221</scope>
</reference>
<reference key="15">
    <citation type="journal article" date="2010" name="Nephron Exp. Nephrol.">
        <title>Expression of angiopoietin-like 3 associated with puromycin-induced podocyte damage.</title>
        <authorList>
            <person name="Jia R."/>
            <person name="Hong X."/>
            <person name="Li S."/>
            <person name="Haichun Y."/>
            <person name="Chuanming H."/>
        </authorList>
    </citation>
    <scope>SUBCELLULAR LOCATION</scope>
    <scope>INDUCTION</scope>
</reference>
<reference key="16">
    <citation type="journal article" date="2011" name="Blood">
        <title>Angiopoietin-like protein 3 supports the activity of hematopoietic stem cells in the bone marrow niche.</title>
        <authorList>
            <person name="Zheng J."/>
            <person name="Huynh H."/>
            <person name="Umikawa M."/>
            <person name="Silvany R."/>
            <person name="Zhang C.C."/>
        </authorList>
    </citation>
    <scope>FUNCTION</scope>
    <scope>TISSUE SPECIFICITY</scope>
</reference>
<reference key="17">
    <citation type="journal article" date="2013" name="Biomed. Res. Int.">
        <title>Angiopoietin-like 3 induces podocyte F-actin rearrangement through integrin alpha(V)beta(3)/FAK/PI3K pathway-mediated Rac1 activation.</title>
        <authorList>
            <person name="Lin Y."/>
            <person name="Rao J."/>
            <person name="Zha X.L."/>
            <person name="Xu H."/>
        </authorList>
    </citation>
    <scope>FUNCTION</scope>
</reference>
<reference key="18">
    <citation type="journal article" date="2013" name="J. Biol. Chem.">
        <title>Furin is the primary in vivo convertase of angiopoietin-like 3 and endothelial lipase in hepatocytes.</title>
        <authorList>
            <person name="Essalmani R."/>
            <person name="Susan-Resiga D."/>
            <person name="Chamberland A."/>
            <person name="Asselin M.C."/>
            <person name="Canuel M."/>
            <person name="Constam D."/>
            <person name="Creemers J.W."/>
            <person name="Day R."/>
            <person name="Gauthier D."/>
            <person name="Prat A."/>
            <person name="Seidah N.G."/>
        </authorList>
    </citation>
    <scope>PROTEOLYTIC CLEAVAGE</scope>
    <scope>MUTAGENESIS OF ARG-221 AND ARG-224</scope>
    <scope>SUBCELLULAR LOCATION</scope>
</reference>
<reference key="19">
    <citation type="journal article" date="2015" name="Diabetes">
        <title>Regulation of energy balance by the hypothalamic lipoprotein lipase regulator Angptl3.</title>
        <authorList>
            <person name="Kim H.K."/>
            <person name="Shin M.S."/>
            <person name="Youn B.S."/>
            <person name="Kang G.M."/>
            <person name="Gil S.Y."/>
            <person name="Lee C.H."/>
            <person name="Choi J.H."/>
            <person name="Lim H.S."/>
            <person name="Yoo H.J."/>
            <person name="Kim M.S."/>
        </authorList>
    </citation>
    <scope>FUNCTION</scope>
    <scope>TISSUE SPECIFICITY</scope>
    <scope>INDUCTION</scope>
</reference>
<reference key="20">
    <citation type="journal article" date="2015" name="J. Lipid Res.">
        <title>Inactivation of ANGPTL3 reduces hepatic VLDL-triglyceride secretion.</title>
        <authorList>
            <person name="Wang Y."/>
            <person name="Gusarova V."/>
            <person name="Banfi S."/>
            <person name="Gromada J."/>
            <person name="Cohen J.C."/>
            <person name="Hobbs H.H."/>
        </authorList>
    </citation>
    <scope>FUNCTION</scope>
</reference>
<reference key="21">
    <citation type="journal article" date="2015" name="Pediatr. Res.">
        <title>A novel role of angiopoietin-like-3 associated with podocyte injury.</title>
        <authorList>
            <person name="Liu J."/>
            <person name="Gao X."/>
            <person name="Zhai Y."/>
            <person name="Shen Q."/>
            <person name="Sun L."/>
            <person name="Feng C."/>
            <person name="Rao J."/>
            <person name="Liu H."/>
            <person name="Zha X."/>
            <person name="Guo M."/>
            <person name="Ma D."/>
            <person name="Zhang Z."/>
            <person name="Li R."/>
            <person name="Xu H."/>
        </authorList>
    </citation>
    <scope>FUNCTION</scope>
    <scope>INTERACTION WITH ITGB3</scope>
    <scope>TISSUE SPECIFICITY</scope>
    <scope>SUBCELLULAR LOCATION</scope>
</reference>
<reference key="22">
    <citation type="journal article" date="2015" name="Proc. Natl. Acad. Sci. U.S.A.">
        <title>Hepatic ANGPTL3 regulates adipose tissue energy homeostasis.</title>
        <authorList>
            <person name="Wang Y."/>
            <person name="McNutt M.C."/>
            <person name="Banfi S."/>
            <person name="Levin M.G."/>
            <person name="Holland W.L."/>
            <person name="Gusarova V."/>
            <person name="Gromada J."/>
            <person name="Cohen J.C."/>
            <person name="Hobbs H.H."/>
        </authorList>
    </citation>
    <scope>FUNCTION</scope>
</reference>
<gene>
    <name type="primary">Angptl3</name>
</gene>
<comment type="function">
    <text evidence="1 6 8 11 13 15 20 22 23">Acts in part as a hepatokine that is involved in regulation of lipid and glucose metabolism (PubMed:11788823, PubMed:12671033). Proposed to play a role in the trafficking of energy substrates to either storage or oxidative tissues in response to food intake (PubMed:26305978). Has a stimulatory effect on plasma triglycerides (TG), which is achieved by suppressing plasma TG clearance via inhibition of LPL activity; the function seems to be specific for the feeding conditions. The inhibition of LPL activity appears to be an indirect mechanism involving recruitment of proprotein convertases PCSK6 and FURIN to LPL leading to cleavage and dissociation of LPL from the cell surface; the function does not require ANGPTL3 proteolytic cleavage but seems to be mediated by the N-terminal domain, and is not inhibited by GPIHBP1 (PubMed:12909640, PubMed:16081640, PubMed:20581395). Can inhibit endothelial lipase, causing increased plasma levels of high density lipoprotein (HDL) cholesterol and phospholipids; the cleaved N-terminal domain is more efficient than the uncleaved proprotein (PubMed:17681148). Can bind to adipocytes to activate lipolysis, releasing free fatty acids and glycerol (By similarity). Suppresses LPL specifically in oxidative tissues which is required to route very low density lipoprotein (VLDL)-TG to white adipose tissue (WAT) for storage in response to food; the function may involve cooperation with circulating, liver-derived ANGPTL8 and ANGPTL4 expression in WAT (PubMed:26305978). Contributes to lower plasma levels of low density lipoprotein (LDL)-cholesterol by a mechanism that is independent of the canonical pathway implicating APOE and LDLR (PubMed:25954050). May stimulate hypothalamic LPL activity (PubMed:25338813).</text>
</comment>
<comment type="function">
    <text evidence="1 7 16 17 19 21">Involved in angiogenesis (PubMed:11877390). Binds to endothelial cells via integrin alpha-V/beta-3 (ITGAV:ITGB3), activates FAK, MAPK and Akt signaling pathways and induces cell adhesion and cell migration (By similarity). May increase the motility of podocytes. Secreted from podocytes, may modulate properties of glomerular endothelial cells involving integrin alpha-V/beta-3 and Akt signaling (By similarity). May induce actin filament rearrangements in podocytes implicating integrin alpha-V/beta-3 and Rac1 activation (PubMed:20633534, PubMed:24294595, PubMed:25710887). Binds to hematopoietic stem cells (HSC) and is involved in the regulation of HSC activity probably implicating down-regulation of IKZF1/IKAROS (PubMed:20959605).</text>
</comment>
<comment type="subunit">
    <text evidence="1 21">Interacts with ANGPTL8 (By similarity). Interacts with ITGB3.</text>
</comment>
<comment type="subcellular location">
    <subcellularLocation>
        <location evidence="18">Secreted</location>
    </subcellularLocation>
    <subcellularLocation>
        <location evidence="21">Cell projection</location>
        <location evidence="21">Lamellipodium</location>
    </subcellularLocation>
    <text evidence="14 21">Colocalized with HSPG2 and activated ITGB3 on podocytes.</text>
</comment>
<comment type="tissue specificity">
    <text evidence="5 17 20 21">Predominantly expressed in liver, weakly expressed in kidney and lung. Expressed in podocytes (at protein level). Expressed in hypothalamic neurons (at protein level). Expressed in bone marrow sinusoidal endothelial cells (at protein level).</text>
</comment>
<comment type="induction">
    <text evidence="9 10 14 20">Down-regulated by insulin and leptin. Not regulated by nutritional status (fed/fasting) Up-regulated in podocytes by puromycin. Up-regulated after feeding in the hypothalamus.</text>
</comment>
<comment type="domain">
    <text evidence="1">The fibrinogen C-terminal domain is sufficient to mediate endothelial cell adhesion.</text>
</comment>
<comment type="PTM">
    <text evidence="13 18">In part proteolytically cleaved by proprotein convertases; proposed to be involved in activation. In primary hepatocytes is intracellularily predominantly processed by FURIN and extracellularily by FURIN and PCSK6/PACE4. In 18.5 dpc embryos 75% of protein is found to be processed compared to 25 % in adults.</text>
</comment>
<comment type="disruption phenotype">
    <text evidence="6 9 11 12">Low plasma levels of triglyceride, HDL cholesterol and HDL phospholipids, and non-esterified fatty acids (NEFA). Animals fed on high-fat, high-calorie (HFC) diet show reduced epididymal adipose tissue weight with no difference in adipocyte size. Hypotriglyceridemia with elevated postheparin plasma LPL activity is specifically observed in the fed state. Mice deficient in both Angptl3 and Angptl4 show an additive effect on plasma triglycerides and did not survive past 2 months of age.</text>
</comment>
<comment type="miscellaneous">
    <text evidence="25">Was suggested to inhibit LPL through a direct mechanism; however, the necessary concentrations to achieve the in vitro inhibition are at least 30-fold higher than ANGPTL3 plasma concentrations.</text>
</comment>
<protein>
    <recommendedName>
        <fullName>Angiopoietin-related protein 3</fullName>
    </recommendedName>
    <alternativeName>
        <fullName>Angiopoietin-like protein 3</fullName>
    </alternativeName>
    <component>
        <recommendedName>
            <fullName>ANGPTL3(17-224)</fullName>
        </recommendedName>
    </component>
</protein>
<dbReference type="EMBL" id="AF162224">
    <property type="protein sequence ID" value="AAD45920.1"/>
    <property type="molecule type" value="mRNA"/>
</dbReference>
<dbReference type="EMBL" id="BC019491">
    <property type="protein sequence ID" value="AAH19491.1"/>
    <property type="molecule type" value="mRNA"/>
</dbReference>
<dbReference type="CCDS" id="CCDS38817.1"/>
<dbReference type="RefSeq" id="NP_038941.1">
    <property type="nucleotide sequence ID" value="NM_013913.4"/>
</dbReference>
<dbReference type="SMR" id="Q9R182"/>
<dbReference type="FunCoup" id="Q9R182">
    <property type="interactions" value="150"/>
</dbReference>
<dbReference type="STRING" id="10090.ENSMUSP00000030280"/>
<dbReference type="GlyCosmos" id="Q9R182">
    <property type="glycosylation" value="5 sites, No reported glycans"/>
</dbReference>
<dbReference type="GlyGen" id="Q9R182">
    <property type="glycosylation" value="5 sites"/>
</dbReference>
<dbReference type="iPTMnet" id="Q9R182"/>
<dbReference type="PhosphoSitePlus" id="Q9R182"/>
<dbReference type="CPTAC" id="non-CPTAC-4016"/>
<dbReference type="PaxDb" id="10090-ENSMUSP00000030280"/>
<dbReference type="ProteomicsDB" id="296291"/>
<dbReference type="ABCD" id="Q9R182">
    <property type="antibodies" value="1 sequenced antibody"/>
</dbReference>
<dbReference type="Antibodypedia" id="19489">
    <property type="antibodies" value="519 antibodies from 41 providers"/>
</dbReference>
<dbReference type="DNASU" id="30924"/>
<dbReference type="Ensembl" id="ENSMUST00000030280.7">
    <property type="protein sequence ID" value="ENSMUSP00000030280.7"/>
    <property type="gene ID" value="ENSMUSG00000028553.13"/>
</dbReference>
<dbReference type="GeneID" id="30924"/>
<dbReference type="KEGG" id="mmu:30924"/>
<dbReference type="UCSC" id="uc008tur.1">
    <property type="organism name" value="mouse"/>
</dbReference>
<dbReference type="AGR" id="MGI:1353627"/>
<dbReference type="CTD" id="27329"/>
<dbReference type="MGI" id="MGI:1353627">
    <property type="gene designation" value="Angptl3"/>
</dbReference>
<dbReference type="VEuPathDB" id="HostDB:ENSMUSG00000028553"/>
<dbReference type="eggNOG" id="KOG2579">
    <property type="taxonomic scope" value="Eukaryota"/>
</dbReference>
<dbReference type="GeneTree" id="ENSGT00940000156746"/>
<dbReference type="HOGENOM" id="CLU_038628_2_0_1"/>
<dbReference type="InParanoid" id="Q9R182"/>
<dbReference type="OMA" id="WKEEKHW"/>
<dbReference type="OrthoDB" id="8866652at2759"/>
<dbReference type="PhylomeDB" id="Q9R182"/>
<dbReference type="TreeFam" id="TF329953"/>
<dbReference type="Reactome" id="R-MMU-8963889">
    <property type="pathway name" value="Assembly of active LPL and LIPC lipase complexes"/>
</dbReference>
<dbReference type="BioGRID-ORCS" id="30924">
    <property type="hits" value="4 hits in 80 CRISPR screens"/>
</dbReference>
<dbReference type="PRO" id="PR:Q9R182"/>
<dbReference type="Proteomes" id="UP000000589">
    <property type="component" value="Chromosome 4"/>
</dbReference>
<dbReference type="RNAct" id="Q9R182">
    <property type="molecule type" value="protein"/>
</dbReference>
<dbReference type="Bgee" id="ENSMUSG00000028553">
    <property type="expression patterns" value="Expressed in left lobe of liver and 64 other cell types or tissues"/>
</dbReference>
<dbReference type="ExpressionAtlas" id="Q9R182">
    <property type="expression patterns" value="baseline and differential"/>
</dbReference>
<dbReference type="GO" id="GO:0009986">
    <property type="term" value="C:cell surface"/>
    <property type="evidence" value="ECO:0000314"/>
    <property type="project" value="MGI"/>
</dbReference>
<dbReference type="GO" id="GO:0005769">
    <property type="term" value="C:early endosome"/>
    <property type="evidence" value="ECO:0000314"/>
    <property type="project" value="MGI"/>
</dbReference>
<dbReference type="GO" id="GO:0005576">
    <property type="term" value="C:extracellular region"/>
    <property type="evidence" value="ECO:0000250"/>
    <property type="project" value="MGI"/>
</dbReference>
<dbReference type="GO" id="GO:0005615">
    <property type="term" value="C:extracellular space"/>
    <property type="evidence" value="ECO:0007669"/>
    <property type="project" value="Ensembl"/>
</dbReference>
<dbReference type="GO" id="GO:0005794">
    <property type="term" value="C:Golgi apparatus"/>
    <property type="evidence" value="ECO:0000314"/>
    <property type="project" value="MGI"/>
</dbReference>
<dbReference type="GO" id="GO:0030027">
    <property type="term" value="C:lamellipodium"/>
    <property type="evidence" value="ECO:0007669"/>
    <property type="project" value="UniProtKB-SubCell"/>
</dbReference>
<dbReference type="GO" id="GO:0004857">
    <property type="term" value="F:enzyme inhibitor activity"/>
    <property type="evidence" value="ECO:0000314"/>
    <property type="project" value="UniProtKB"/>
</dbReference>
<dbReference type="GO" id="GO:0008083">
    <property type="term" value="F:growth factor activity"/>
    <property type="evidence" value="ECO:0007669"/>
    <property type="project" value="Ensembl"/>
</dbReference>
<dbReference type="GO" id="GO:0008201">
    <property type="term" value="F:heparin binding"/>
    <property type="evidence" value="ECO:0007669"/>
    <property type="project" value="UniProtKB-KW"/>
</dbReference>
<dbReference type="GO" id="GO:0005178">
    <property type="term" value="F:integrin binding"/>
    <property type="evidence" value="ECO:0000250"/>
    <property type="project" value="UniProtKB"/>
</dbReference>
<dbReference type="GO" id="GO:0035473">
    <property type="term" value="F:lipase binding"/>
    <property type="evidence" value="ECO:0007669"/>
    <property type="project" value="Ensembl"/>
</dbReference>
<dbReference type="GO" id="GO:0004859">
    <property type="term" value="F:phospholipase inhibitor activity"/>
    <property type="evidence" value="ECO:0000315"/>
    <property type="project" value="BHF-UCL"/>
</dbReference>
<dbReference type="GO" id="GO:0055090">
    <property type="term" value="P:acylglycerol homeostasis"/>
    <property type="evidence" value="ECO:0000315"/>
    <property type="project" value="BHF-UCL"/>
</dbReference>
<dbReference type="GO" id="GO:0001525">
    <property type="term" value="P:angiogenesis"/>
    <property type="evidence" value="ECO:0007669"/>
    <property type="project" value="UniProtKB-KW"/>
</dbReference>
<dbReference type="GO" id="GO:0048844">
    <property type="term" value="P:artery morphogenesis"/>
    <property type="evidence" value="ECO:0000315"/>
    <property type="project" value="BHF-UCL"/>
</dbReference>
<dbReference type="GO" id="GO:0007160">
    <property type="term" value="P:cell-matrix adhesion"/>
    <property type="evidence" value="ECO:0000250"/>
    <property type="project" value="UniProtKB"/>
</dbReference>
<dbReference type="GO" id="GO:0042632">
    <property type="term" value="P:cholesterol homeostasis"/>
    <property type="evidence" value="ECO:0000315"/>
    <property type="project" value="BHF-UCL"/>
</dbReference>
<dbReference type="GO" id="GO:0008203">
    <property type="term" value="P:cholesterol metabolic process"/>
    <property type="evidence" value="ECO:0007669"/>
    <property type="project" value="Ensembl"/>
</dbReference>
<dbReference type="GO" id="GO:0006631">
    <property type="term" value="P:fatty acid metabolic process"/>
    <property type="evidence" value="ECO:0007669"/>
    <property type="project" value="Ensembl"/>
</dbReference>
<dbReference type="GO" id="GO:0006071">
    <property type="term" value="P:glycerol metabolic process"/>
    <property type="evidence" value="ECO:0007669"/>
    <property type="project" value="Ensembl"/>
</dbReference>
<dbReference type="GO" id="GO:0019915">
    <property type="term" value="P:lipid storage"/>
    <property type="evidence" value="ECO:0007669"/>
    <property type="project" value="Ensembl"/>
</dbReference>
<dbReference type="GO" id="GO:0010903">
    <property type="term" value="P:negative regulation of very-low-density lipoprotein particle remodeling"/>
    <property type="evidence" value="ECO:0000315"/>
    <property type="project" value="BHF-UCL"/>
</dbReference>
<dbReference type="GO" id="GO:0009395">
    <property type="term" value="P:phospholipid catabolic process"/>
    <property type="evidence" value="ECO:0007669"/>
    <property type="project" value="Ensembl"/>
</dbReference>
<dbReference type="GO" id="GO:0055091">
    <property type="term" value="P:phospholipid homeostasis"/>
    <property type="evidence" value="ECO:0000315"/>
    <property type="project" value="BHF-UCL"/>
</dbReference>
<dbReference type="GO" id="GO:0045766">
    <property type="term" value="P:positive regulation of angiogenesis"/>
    <property type="evidence" value="ECO:0000250"/>
    <property type="project" value="UniProtKB"/>
</dbReference>
<dbReference type="GO" id="GO:0030335">
    <property type="term" value="P:positive regulation of cell migration"/>
    <property type="evidence" value="ECO:0000250"/>
    <property type="project" value="UniProtKB"/>
</dbReference>
<dbReference type="GO" id="GO:0050996">
    <property type="term" value="P:positive regulation of lipid catabolic process"/>
    <property type="evidence" value="ECO:0007669"/>
    <property type="project" value="Ensembl"/>
</dbReference>
<dbReference type="GO" id="GO:0045834">
    <property type="term" value="P:positive regulation of lipid metabolic process"/>
    <property type="evidence" value="ECO:0000303"/>
    <property type="project" value="UniProtKB"/>
</dbReference>
<dbReference type="GO" id="GO:0090318">
    <property type="term" value="P:regulation of chylomicron remodeling"/>
    <property type="evidence" value="ECO:0000315"/>
    <property type="project" value="BHF-UCL"/>
</dbReference>
<dbReference type="GO" id="GO:0009725">
    <property type="term" value="P:response to hormone"/>
    <property type="evidence" value="ECO:0007669"/>
    <property type="project" value="Ensembl"/>
</dbReference>
<dbReference type="GO" id="GO:0070328">
    <property type="term" value="P:triglyceride homeostasis"/>
    <property type="evidence" value="ECO:0000315"/>
    <property type="project" value="BHF-UCL"/>
</dbReference>
<dbReference type="GO" id="GO:0006641">
    <property type="term" value="P:triglyceride metabolic process"/>
    <property type="evidence" value="ECO:0000303"/>
    <property type="project" value="UniProtKB"/>
</dbReference>
<dbReference type="CDD" id="cd00087">
    <property type="entry name" value="FReD"/>
    <property type="match status" value="1"/>
</dbReference>
<dbReference type="FunFam" id="3.90.215.10:FF:000008">
    <property type="entry name" value="Angiopoietin like 3"/>
    <property type="match status" value="1"/>
</dbReference>
<dbReference type="Gene3D" id="3.90.215.10">
    <property type="entry name" value="Gamma Fibrinogen, chain A, domain 1"/>
    <property type="match status" value="1"/>
</dbReference>
<dbReference type="InterPro" id="IPR036056">
    <property type="entry name" value="Fibrinogen-like_C"/>
</dbReference>
<dbReference type="InterPro" id="IPR014716">
    <property type="entry name" value="Fibrinogen_a/b/g_C_1"/>
</dbReference>
<dbReference type="InterPro" id="IPR002181">
    <property type="entry name" value="Fibrinogen_a/b/g_C_dom"/>
</dbReference>
<dbReference type="InterPro" id="IPR050373">
    <property type="entry name" value="Fibrinogen_C-term_domain"/>
</dbReference>
<dbReference type="PANTHER" id="PTHR19143:SF222">
    <property type="entry name" value="ANGIOPOIETIN-RELATED PROTEIN 3"/>
    <property type="match status" value="1"/>
</dbReference>
<dbReference type="PANTHER" id="PTHR19143">
    <property type="entry name" value="FIBRINOGEN/TENASCIN/ANGIOPOEITIN"/>
    <property type="match status" value="1"/>
</dbReference>
<dbReference type="Pfam" id="PF00147">
    <property type="entry name" value="Fibrinogen_C"/>
    <property type="match status" value="1"/>
</dbReference>
<dbReference type="SMART" id="SM00186">
    <property type="entry name" value="FBG"/>
    <property type="match status" value="1"/>
</dbReference>
<dbReference type="SUPFAM" id="SSF56496">
    <property type="entry name" value="Fibrinogen C-terminal domain-like"/>
    <property type="match status" value="1"/>
</dbReference>
<dbReference type="PROSITE" id="PS51406">
    <property type="entry name" value="FIBRINOGEN_C_2"/>
    <property type="match status" value="1"/>
</dbReference>
<accession>Q9R182</accession>
<evidence type="ECO:0000250" key="1">
    <source>
        <dbReference type="UniProtKB" id="Q9Y5C1"/>
    </source>
</evidence>
<evidence type="ECO:0000255" key="2"/>
<evidence type="ECO:0000255" key="3">
    <source>
        <dbReference type="PROSITE-ProRule" id="PRU00739"/>
    </source>
</evidence>
<evidence type="ECO:0000256" key="4">
    <source>
        <dbReference type="SAM" id="MobiDB-lite"/>
    </source>
</evidence>
<evidence type="ECO:0000269" key="5">
    <source>
    </source>
</evidence>
<evidence type="ECO:0000269" key="6">
    <source>
    </source>
</evidence>
<evidence type="ECO:0000269" key="7">
    <source>
    </source>
</evidence>
<evidence type="ECO:0000269" key="8">
    <source>
    </source>
</evidence>
<evidence type="ECO:0000269" key="9">
    <source>
    </source>
</evidence>
<evidence type="ECO:0000269" key="10">
    <source>
    </source>
</evidence>
<evidence type="ECO:0000269" key="11">
    <source>
    </source>
</evidence>
<evidence type="ECO:0000269" key="12">
    <source>
    </source>
</evidence>
<evidence type="ECO:0000269" key="13">
    <source>
    </source>
</evidence>
<evidence type="ECO:0000269" key="14">
    <source>
    </source>
</evidence>
<evidence type="ECO:0000269" key="15">
    <source>
    </source>
</evidence>
<evidence type="ECO:0000269" key="16">
    <source>
    </source>
</evidence>
<evidence type="ECO:0000269" key="17">
    <source>
    </source>
</evidence>
<evidence type="ECO:0000269" key="18">
    <source>
    </source>
</evidence>
<evidence type="ECO:0000269" key="19">
    <source>
    </source>
</evidence>
<evidence type="ECO:0000269" key="20">
    <source>
    </source>
</evidence>
<evidence type="ECO:0000269" key="21">
    <source>
    </source>
</evidence>
<evidence type="ECO:0000269" key="22">
    <source>
    </source>
</evidence>
<evidence type="ECO:0000269" key="23">
    <source>
    </source>
</evidence>
<evidence type="ECO:0000305" key="24">
    <source>
    </source>
</evidence>
<evidence type="ECO:0000305" key="25">
    <source>
    </source>
</evidence>
<evidence type="ECO:0000305" key="26">
    <source>
    </source>
</evidence>
<proteinExistence type="evidence at protein level"/>
<keyword id="KW-0037">Angiogenesis</keyword>
<keyword id="KW-0130">Cell adhesion</keyword>
<keyword id="KW-0966">Cell projection</keyword>
<keyword id="KW-0175">Coiled coil</keyword>
<keyword id="KW-1015">Disulfide bond</keyword>
<keyword id="KW-0325">Glycoprotein</keyword>
<keyword id="KW-0358">Heparin-binding</keyword>
<keyword id="KW-0443">Lipid metabolism</keyword>
<keyword id="KW-1185">Reference proteome</keyword>
<keyword id="KW-0964">Secreted</keyword>
<keyword id="KW-0732">Signal</keyword>
<organism>
    <name type="scientific">Mus musculus</name>
    <name type="common">Mouse</name>
    <dbReference type="NCBI Taxonomy" id="10090"/>
    <lineage>
        <taxon>Eukaryota</taxon>
        <taxon>Metazoa</taxon>
        <taxon>Chordata</taxon>
        <taxon>Craniata</taxon>
        <taxon>Vertebrata</taxon>
        <taxon>Euteleostomi</taxon>
        <taxon>Mammalia</taxon>
        <taxon>Eutheria</taxon>
        <taxon>Euarchontoglires</taxon>
        <taxon>Glires</taxon>
        <taxon>Rodentia</taxon>
        <taxon>Myomorpha</taxon>
        <taxon>Muroidea</taxon>
        <taxon>Muridae</taxon>
        <taxon>Murinae</taxon>
        <taxon>Mus</taxon>
        <taxon>Mus</taxon>
    </lineage>
</organism>
<feature type="signal peptide" evidence="2">
    <location>
        <begin position="1"/>
        <end position="16"/>
    </location>
</feature>
<feature type="chain" id="PRO_0000009123" description="Angiopoietin-related protein 3">
    <location>
        <begin position="17"/>
        <end position="455"/>
    </location>
</feature>
<feature type="chain" id="PRO_0000435905" description="ANGPTL3(17-224)" evidence="24 26">
    <location>
        <begin position="17"/>
        <end position="224"/>
    </location>
</feature>
<feature type="domain" description="Fibrinogen C-terminal" evidence="3">
    <location>
        <begin position="237"/>
        <end position="455"/>
    </location>
</feature>
<feature type="region of interest" description="Sufficient to inhibit LIPG/EL phospholipase activity" evidence="1">
    <location>
        <begin position="17"/>
        <end position="207"/>
    </location>
</feature>
<feature type="region of interest" description="Sufficient to inhibit LPL lipase activity" evidence="1 15">
    <location>
        <begin position="17"/>
        <end position="165"/>
    </location>
</feature>
<feature type="region of interest" description="Required for inhibition of LPL lipase activity" evidence="1">
    <location>
        <begin position="32"/>
        <end position="56"/>
    </location>
</feature>
<feature type="region of interest" description="Disordered" evidence="4">
    <location>
        <begin position="202"/>
        <end position="242"/>
    </location>
</feature>
<feature type="coiled-coil region" evidence="2">
    <location>
        <begin position="85"/>
        <end position="206"/>
    </location>
</feature>
<feature type="compositionally biased region" description="Polar residues" evidence="4">
    <location>
        <begin position="209"/>
        <end position="220"/>
    </location>
</feature>
<feature type="glycosylation site" description="N-linked (GlcNAc...) asparagine" evidence="2">
    <location>
        <position position="115"/>
    </location>
</feature>
<feature type="glycosylation site" description="O-linked (GlcNAc) threonine" evidence="1">
    <location>
        <position position="226"/>
    </location>
</feature>
<feature type="glycosylation site" description="N-linked (GlcNAc...) asparagine" evidence="2">
    <location>
        <position position="232"/>
    </location>
</feature>
<feature type="glycosylation site" description="N-linked (GlcNAc...) asparagine" evidence="2">
    <location>
        <position position="296"/>
    </location>
</feature>
<feature type="glycosylation site" description="N-linked (GlcNAc...) asparagine" evidence="2">
    <location>
        <position position="357"/>
    </location>
</feature>
<feature type="disulfide bond" evidence="3">
    <location>
        <begin position="246"/>
        <end position="274"/>
    </location>
</feature>
<feature type="disulfide bond" evidence="3">
    <location>
        <begin position="394"/>
        <end position="408"/>
    </location>
</feature>
<feature type="mutagenesis site" description="Abolishes proteolytical cleavage." evidence="15 18">
    <original>R</original>
    <variation>A</variation>
    <location>
        <position position="221"/>
    </location>
</feature>
<feature type="mutagenesis site" description="Abolishes proteolytical cleavage." evidence="18">
    <original>R</original>
    <variation>A</variation>
    <location>
        <position position="224"/>
    </location>
</feature>
<sequence length="455" mass="52543">MHTIKLFLFVVPLVIASRVDPDLSSFDSAPSEPKSRFAMLDDVKILANGLLQLGHGLKDFVHKTKGQINDIFQKLNIFDQSFYDLSLRTNEIKEEEKELRRTTSTLQVKNEEVKNMSVELNSKLESLLEEKTALQHKVRALEEQLTNLILSPAGAQEHPEVTSLKSFVEQQDNSIRELLQSVEEQYKQLSQQHMQIKEIEKQLRKTGIQEPSENSLSSKSRAPRTTPPLQLNETENTEQDDLPADCSAVYNRGEHTSGVYTIKPRNSQGFNVYCDTQSGSPWTLIQHRKDGSQDFNETWENYEKGFGRLDGEFWLGLEKIYAIVQQSNYILRLELQDWKDSKHYVEYSFHLGSHETNYTLHVAEIAGNIPGALPEHTDLMFSTWNHRAKGQLYCPESYSGGWWWNDICGENNLNGKYNKPRTKSRPERRRGIYWRPQSRKLYAIKSSKMMLQPTT</sequence>
<name>ANGL3_MOUSE</name>